<reference key="1">
    <citation type="journal article" date="2007" name="J. Bacteriol.">
        <title>Complete genome of acute rheumatic fever-associated serotype M5 Streptococcus pyogenes strain Manfredo.</title>
        <authorList>
            <person name="Holden M.T.G."/>
            <person name="Scott A."/>
            <person name="Cherevach I."/>
            <person name="Chillingworth T."/>
            <person name="Churcher C."/>
            <person name="Cronin A."/>
            <person name="Dowd L."/>
            <person name="Feltwell T."/>
            <person name="Hamlin N."/>
            <person name="Holroyd S."/>
            <person name="Jagels K."/>
            <person name="Moule S."/>
            <person name="Mungall K."/>
            <person name="Quail M.A."/>
            <person name="Price C."/>
            <person name="Rabbinowitsch E."/>
            <person name="Sharp S."/>
            <person name="Skelton J."/>
            <person name="Whitehead S."/>
            <person name="Barrell B.G."/>
            <person name="Kehoe M."/>
            <person name="Parkhill J."/>
        </authorList>
    </citation>
    <scope>NUCLEOTIDE SEQUENCE [LARGE SCALE GENOMIC DNA]</scope>
    <source>
        <strain>Manfredo</strain>
    </source>
</reference>
<keyword id="KW-0963">Cytoplasm</keyword>
<keyword id="KW-0312">Gluconeogenesis</keyword>
<keyword id="KW-0324">Glycolysis</keyword>
<keyword id="KW-0413">Isomerase</keyword>
<sequence length="252" mass="26560">MSRKPIIAGNWKMNKNPQEAKAFVEAVASKLPSTDLVDVAVAAPAVDLVTTIEAAKDSVLKVAAQNCYFENTGAFTGETSPKVLAEMGADYVVIGHSERRDYFHETDEDINKKAKAIFANGLTPIVCCGESLETYEAGKAVEFVGAQVSAALAGLSAEQVASLVLAYEPIWAIGTGKSATQDDAQNMCKAVRDVVAADFGQEVADKVRVQYGGSVKPENVKDYMACPDVDGALVGGASLEAGSFLALLDFLN</sequence>
<name>TPIS_STRPG</name>
<proteinExistence type="inferred from homology"/>
<gene>
    <name evidence="1" type="primary">tpiA</name>
    <name type="ordered locus">SpyM51354</name>
</gene>
<dbReference type="EC" id="5.3.1.1" evidence="1"/>
<dbReference type="EMBL" id="AM295007">
    <property type="protein sequence ID" value="CAM30682.1"/>
    <property type="molecule type" value="Genomic_DNA"/>
</dbReference>
<dbReference type="RefSeq" id="WP_011889056.1">
    <property type="nucleotide sequence ID" value="NC_009332.1"/>
</dbReference>
<dbReference type="SMR" id="A2RFQ3"/>
<dbReference type="KEGG" id="spf:SpyM51354"/>
<dbReference type="HOGENOM" id="CLU_024251_2_3_9"/>
<dbReference type="UniPathway" id="UPA00109">
    <property type="reaction ID" value="UER00189"/>
</dbReference>
<dbReference type="UniPathway" id="UPA00138"/>
<dbReference type="GO" id="GO:0005829">
    <property type="term" value="C:cytosol"/>
    <property type="evidence" value="ECO:0007669"/>
    <property type="project" value="TreeGrafter"/>
</dbReference>
<dbReference type="GO" id="GO:0004807">
    <property type="term" value="F:triose-phosphate isomerase activity"/>
    <property type="evidence" value="ECO:0007669"/>
    <property type="project" value="UniProtKB-UniRule"/>
</dbReference>
<dbReference type="GO" id="GO:0006094">
    <property type="term" value="P:gluconeogenesis"/>
    <property type="evidence" value="ECO:0007669"/>
    <property type="project" value="UniProtKB-UniRule"/>
</dbReference>
<dbReference type="GO" id="GO:0046166">
    <property type="term" value="P:glyceraldehyde-3-phosphate biosynthetic process"/>
    <property type="evidence" value="ECO:0007669"/>
    <property type="project" value="TreeGrafter"/>
</dbReference>
<dbReference type="GO" id="GO:0019563">
    <property type="term" value="P:glycerol catabolic process"/>
    <property type="evidence" value="ECO:0007669"/>
    <property type="project" value="TreeGrafter"/>
</dbReference>
<dbReference type="GO" id="GO:0006096">
    <property type="term" value="P:glycolytic process"/>
    <property type="evidence" value="ECO:0007669"/>
    <property type="project" value="UniProtKB-UniRule"/>
</dbReference>
<dbReference type="CDD" id="cd00311">
    <property type="entry name" value="TIM"/>
    <property type="match status" value="1"/>
</dbReference>
<dbReference type="FunFam" id="3.20.20.70:FF:000016">
    <property type="entry name" value="Triosephosphate isomerase"/>
    <property type="match status" value="1"/>
</dbReference>
<dbReference type="Gene3D" id="3.20.20.70">
    <property type="entry name" value="Aldolase class I"/>
    <property type="match status" value="1"/>
</dbReference>
<dbReference type="HAMAP" id="MF_00147_B">
    <property type="entry name" value="TIM_B"/>
    <property type="match status" value="1"/>
</dbReference>
<dbReference type="InterPro" id="IPR013785">
    <property type="entry name" value="Aldolase_TIM"/>
</dbReference>
<dbReference type="InterPro" id="IPR035990">
    <property type="entry name" value="TIM_sf"/>
</dbReference>
<dbReference type="InterPro" id="IPR022896">
    <property type="entry name" value="TrioseP_Isoase_bac/euk"/>
</dbReference>
<dbReference type="InterPro" id="IPR000652">
    <property type="entry name" value="Triosephosphate_isomerase"/>
</dbReference>
<dbReference type="InterPro" id="IPR020861">
    <property type="entry name" value="Triosephosphate_isomerase_AS"/>
</dbReference>
<dbReference type="NCBIfam" id="TIGR00419">
    <property type="entry name" value="tim"/>
    <property type="match status" value="1"/>
</dbReference>
<dbReference type="PANTHER" id="PTHR21139">
    <property type="entry name" value="TRIOSEPHOSPHATE ISOMERASE"/>
    <property type="match status" value="1"/>
</dbReference>
<dbReference type="PANTHER" id="PTHR21139:SF42">
    <property type="entry name" value="TRIOSEPHOSPHATE ISOMERASE"/>
    <property type="match status" value="1"/>
</dbReference>
<dbReference type="Pfam" id="PF00121">
    <property type="entry name" value="TIM"/>
    <property type="match status" value="1"/>
</dbReference>
<dbReference type="SUPFAM" id="SSF51351">
    <property type="entry name" value="Triosephosphate isomerase (TIM)"/>
    <property type="match status" value="1"/>
</dbReference>
<dbReference type="PROSITE" id="PS00171">
    <property type="entry name" value="TIM_1"/>
    <property type="match status" value="1"/>
</dbReference>
<dbReference type="PROSITE" id="PS51440">
    <property type="entry name" value="TIM_2"/>
    <property type="match status" value="1"/>
</dbReference>
<feature type="chain" id="PRO_0000307578" description="Triosephosphate isomerase">
    <location>
        <begin position="1"/>
        <end position="252"/>
    </location>
</feature>
<feature type="active site" description="Electrophile" evidence="1">
    <location>
        <position position="96"/>
    </location>
</feature>
<feature type="active site" description="Proton acceptor" evidence="1">
    <location>
        <position position="168"/>
    </location>
</feature>
<feature type="binding site" evidence="1">
    <location>
        <begin position="10"/>
        <end position="12"/>
    </location>
    <ligand>
        <name>substrate</name>
    </ligand>
</feature>
<feature type="binding site" evidence="1">
    <location>
        <position position="174"/>
    </location>
    <ligand>
        <name>substrate</name>
    </ligand>
</feature>
<feature type="binding site" evidence="1">
    <location>
        <position position="214"/>
    </location>
    <ligand>
        <name>substrate</name>
    </ligand>
</feature>
<feature type="binding site" evidence="1">
    <location>
        <begin position="235"/>
        <end position="236"/>
    </location>
    <ligand>
        <name>substrate</name>
    </ligand>
</feature>
<accession>A2RFQ3</accession>
<organism>
    <name type="scientific">Streptococcus pyogenes serotype M5 (strain Manfredo)</name>
    <dbReference type="NCBI Taxonomy" id="160491"/>
    <lineage>
        <taxon>Bacteria</taxon>
        <taxon>Bacillati</taxon>
        <taxon>Bacillota</taxon>
        <taxon>Bacilli</taxon>
        <taxon>Lactobacillales</taxon>
        <taxon>Streptococcaceae</taxon>
        <taxon>Streptococcus</taxon>
    </lineage>
</organism>
<comment type="function">
    <text evidence="1">Involved in the gluconeogenesis. Catalyzes stereospecifically the conversion of dihydroxyacetone phosphate (DHAP) to D-glyceraldehyde-3-phosphate (G3P).</text>
</comment>
<comment type="catalytic activity">
    <reaction evidence="1">
        <text>D-glyceraldehyde 3-phosphate = dihydroxyacetone phosphate</text>
        <dbReference type="Rhea" id="RHEA:18585"/>
        <dbReference type="ChEBI" id="CHEBI:57642"/>
        <dbReference type="ChEBI" id="CHEBI:59776"/>
        <dbReference type="EC" id="5.3.1.1"/>
    </reaction>
</comment>
<comment type="pathway">
    <text evidence="1">Carbohydrate biosynthesis; gluconeogenesis.</text>
</comment>
<comment type="pathway">
    <text evidence="1">Carbohydrate degradation; glycolysis; D-glyceraldehyde 3-phosphate from glycerone phosphate: step 1/1.</text>
</comment>
<comment type="subunit">
    <text evidence="1">Homodimer.</text>
</comment>
<comment type="subcellular location">
    <subcellularLocation>
        <location evidence="1">Cytoplasm</location>
    </subcellularLocation>
</comment>
<comment type="similarity">
    <text evidence="1">Belongs to the triosephosphate isomerase family.</text>
</comment>
<protein>
    <recommendedName>
        <fullName evidence="1">Triosephosphate isomerase</fullName>
        <shortName evidence="1">TIM</shortName>
        <shortName evidence="1">TPI</shortName>
        <ecNumber evidence="1">5.3.1.1</ecNumber>
    </recommendedName>
    <alternativeName>
        <fullName evidence="1">Triose-phosphate isomerase</fullName>
    </alternativeName>
</protein>
<evidence type="ECO:0000255" key="1">
    <source>
        <dbReference type="HAMAP-Rule" id="MF_00147"/>
    </source>
</evidence>